<proteinExistence type="inferred from homology"/>
<keyword id="KW-0067">ATP-binding</keyword>
<keyword id="KW-0963">Cytoplasm</keyword>
<keyword id="KW-0418">Kinase</keyword>
<keyword id="KW-0460">Magnesium</keyword>
<keyword id="KW-0479">Metal-binding</keyword>
<keyword id="KW-0546">Nucleotide metabolism</keyword>
<keyword id="KW-0547">Nucleotide-binding</keyword>
<keyword id="KW-0597">Phosphoprotein</keyword>
<keyword id="KW-0808">Transferase</keyword>
<protein>
    <recommendedName>
        <fullName evidence="1">Nucleoside diphosphate kinase</fullName>
        <shortName evidence="1">NDK</shortName>
        <shortName evidence="1">NDP kinase</shortName>
        <ecNumber evidence="1">2.7.4.6</ecNumber>
    </recommendedName>
    <alternativeName>
        <fullName evidence="1">Nucleoside-2-P kinase</fullName>
    </alternativeName>
</protein>
<evidence type="ECO:0000255" key="1">
    <source>
        <dbReference type="HAMAP-Rule" id="MF_00451"/>
    </source>
</evidence>
<feature type="chain" id="PRO_1000124961" description="Nucleoside diphosphate kinase">
    <location>
        <begin position="1"/>
        <end position="143"/>
    </location>
</feature>
<feature type="active site" description="Pros-phosphohistidine intermediate" evidence="1">
    <location>
        <position position="117"/>
    </location>
</feature>
<feature type="binding site" evidence="1">
    <location>
        <position position="11"/>
    </location>
    <ligand>
        <name>ATP</name>
        <dbReference type="ChEBI" id="CHEBI:30616"/>
    </ligand>
</feature>
<feature type="binding site" evidence="1">
    <location>
        <position position="59"/>
    </location>
    <ligand>
        <name>ATP</name>
        <dbReference type="ChEBI" id="CHEBI:30616"/>
    </ligand>
</feature>
<feature type="binding site" evidence="1">
    <location>
        <position position="87"/>
    </location>
    <ligand>
        <name>ATP</name>
        <dbReference type="ChEBI" id="CHEBI:30616"/>
    </ligand>
</feature>
<feature type="binding site" evidence="1">
    <location>
        <position position="93"/>
    </location>
    <ligand>
        <name>ATP</name>
        <dbReference type="ChEBI" id="CHEBI:30616"/>
    </ligand>
</feature>
<feature type="binding site" evidence="1">
    <location>
        <position position="104"/>
    </location>
    <ligand>
        <name>ATP</name>
        <dbReference type="ChEBI" id="CHEBI:30616"/>
    </ligand>
</feature>
<feature type="binding site" evidence="1">
    <location>
        <position position="114"/>
    </location>
    <ligand>
        <name>ATP</name>
        <dbReference type="ChEBI" id="CHEBI:30616"/>
    </ligand>
</feature>
<name>NDK_ECOLU</name>
<accession>B7N6A6</accession>
<comment type="function">
    <text evidence="1">Major role in the synthesis of nucleoside triphosphates other than ATP. The ATP gamma phosphate is transferred to the NDP beta phosphate via a ping-pong mechanism, using a phosphorylated active-site intermediate.</text>
</comment>
<comment type="catalytic activity">
    <reaction evidence="1">
        <text>a 2'-deoxyribonucleoside 5'-diphosphate + ATP = a 2'-deoxyribonucleoside 5'-triphosphate + ADP</text>
        <dbReference type="Rhea" id="RHEA:44640"/>
        <dbReference type="ChEBI" id="CHEBI:30616"/>
        <dbReference type="ChEBI" id="CHEBI:61560"/>
        <dbReference type="ChEBI" id="CHEBI:73316"/>
        <dbReference type="ChEBI" id="CHEBI:456216"/>
        <dbReference type="EC" id="2.7.4.6"/>
    </reaction>
</comment>
<comment type="catalytic activity">
    <reaction evidence="1">
        <text>a ribonucleoside 5'-diphosphate + ATP = a ribonucleoside 5'-triphosphate + ADP</text>
        <dbReference type="Rhea" id="RHEA:18113"/>
        <dbReference type="ChEBI" id="CHEBI:30616"/>
        <dbReference type="ChEBI" id="CHEBI:57930"/>
        <dbReference type="ChEBI" id="CHEBI:61557"/>
        <dbReference type="ChEBI" id="CHEBI:456216"/>
        <dbReference type="EC" id="2.7.4.6"/>
    </reaction>
</comment>
<comment type="cofactor">
    <cofactor evidence="1">
        <name>Mg(2+)</name>
        <dbReference type="ChEBI" id="CHEBI:18420"/>
    </cofactor>
</comment>
<comment type="subunit">
    <text evidence="1">Homotetramer.</text>
</comment>
<comment type="subcellular location">
    <subcellularLocation>
        <location evidence="1">Cytoplasm</location>
    </subcellularLocation>
</comment>
<comment type="similarity">
    <text evidence="1">Belongs to the NDK family.</text>
</comment>
<gene>
    <name evidence="1" type="primary">ndk</name>
    <name type="ordered locus">ECUMN_2838</name>
</gene>
<sequence length="143" mass="15463">MAIERTFSIIKPNAVAKNVIGNIFARFEAAGFKIVGTKMLHLTVEQARGFYAEHDGKPFFDGLVEFMTSGPIVVSVLEGENAVQRHRDLLGATNPANALAGTLRADYADSLTENGTHGSDSVESAAREIAYFFGEGEVCPRTR</sequence>
<organism>
    <name type="scientific">Escherichia coli O17:K52:H18 (strain UMN026 / ExPEC)</name>
    <dbReference type="NCBI Taxonomy" id="585056"/>
    <lineage>
        <taxon>Bacteria</taxon>
        <taxon>Pseudomonadati</taxon>
        <taxon>Pseudomonadota</taxon>
        <taxon>Gammaproteobacteria</taxon>
        <taxon>Enterobacterales</taxon>
        <taxon>Enterobacteriaceae</taxon>
        <taxon>Escherichia</taxon>
    </lineage>
</organism>
<dbReference type="EC" id="2.7.4.6" evidence="1"/>
<dbReference type="EMBL" id="CU928163">
    <property type="protein sequence ID" value="CAR14015.1"/>
    <property type="molecule type" value="Genomic_DNA"/>
</dbReference>
<dbReference type="RefSeq" id="WP_000963837.1">
    <property type="nucleotide sequence ID" value="NC_011751.1"/>
</dbReference>
<dbReference type="RefSeq" id="YP_002413540.1">
    <property type="nucleotide sequence ID" value="NC_011751.1"/>
</dbReference>
<dbReference type="SMR" id="B7N6A6"/>
<dbReference type="STRING" id="585056.ECUMN_2838"/>
<dbReference type="GeneID" id="93774618"/>
<dbReference type="KEGG" id="eum:ECUMN_2838"/>
<dbReference type="PATRIC" id="fig|585056.7.peg.3023"/>
<dbReference type="HOGENOM" id="CLU_060216_8_1_6"/>
<dbReference type="Proteomes" id="UP000007097">
    <property type="component" value="Chromosome"/>
</dbReference>
<dbReference type="GO" id="GO:0005737">
    <property type="term" value="C:cytoplasm"/>
    <property type="evidence" value="ECO:0007669"/>
    <property type="project" value="UniProtKB-SubCell"/>
</dbReference>
<dbReference type="GO" id="GO:0005524">
    <property type="term" value="F:ATP binding"/>
    <property type="evidence" value="ECO:0007669"/>
    <property type="project" value="UniProtKB-UniRule"/>
</dbReference>
<dbReference type="GO" id="GO:0046872">
    <property type="term" value="F:metal ion binding"/>
    <property type="evidence" value="ECO:0007669"/>
    <property type="project" value="UniProtKB-KW"/>
</dbReference>
<dbReference type="GO" id="GO:0004550">
    <property type="term" value="F:nucleoside diphosphate kinase activity"/>
    <property type="evidence" value="ECO:0007669"/>
    <property type="project" value="UniProtKB-UniRule"/>
</dbReference>
<dbReference type="GO" id="GO:0006241">
    <property type="term" value="P:CTP biosynthetic process"/>
    <property type="evidence" value="ECO:0007669"/>
    <property type="project" value="UniProtKB-UniRule"/>
</dbReference>
<dbReference type="GO" id="GO:0006183">
    <property type="term" value="P:GTP biosynthetic process"/>
    <property type="evidence" value="ECO:0007669"/>
    <property type="project" value="UniProtKB-UniRule"/>
</dbReference>
<dbReference type="GO" id="GO:0006228">
    <property type="term" value="P:UTP biosynthetic process"/>
    <property type="evidence" value="ECO:0007669"/>
    <property type="project" value="UniProtKB-UniRule"/>
</dbReference>
<dbReference type="CDD" id="cd04413">
    <property type="entry name" value="NDPk_I"/>
    <property type="match status" value="1"/>
</dbReference>
<dbReference type="FunFam" id="3.30.70.141:FF:000001">
    <property type="entry name" value="Nucleoside diphosphate kinase"/>
    <property type="match status" value="1"/>
</dbReference>
<dbReference type="Gene3D" id="3.30.70.141">
    <property type="entry name" value="Nucleoside diphosphate kinase-like domain"/>
    <property type="match status" value="1"/>
</dbReference>
<dbReference type="HAMAP" id="MF_00451">
    <property type="entry name" value="NDP_kinase"/>
    <property type="match status" value="1"/>
</dbReference>
<dbReference type="InterPro" id="IPR034907">
    <property type="entry name" value="NDK-like_dom"/>
</dbReference>
<dbReference type="InterPro" id="IPR036850">
    <property type="entry name" value="NDK-like_dom_sf"/>
</dbReference>
<dbReference type="InterPro" id="IPR001564">
    <property type="entry name" value="Nucleoside_diP_kinase"/>
</dbReference>
<dbReference type="InterPro" id="IPR023005">
    <property type="entry name" value="Nucleoside_diP_kinase_AS"/>
</dbReference>
<dbReference type="NCBIfam" id="NF001908">
    <property type="entry name" value="PRK00668.1"/>
    <property type="match status" value="1"/>
</dbReference>
<dbReference type="PANTHER" id="PTHR46161">
    <property type="entry name" value="NUCLEOSIDE DIPHOSPHATE KINASE"/>
    <property type="match status" value="1"/>
</dbReference>
<dbReference type="PANTHER" id="PTHR46161:SF3">
    <property type="entry name" value="NUCLEOSIDE DIPHOSPHATE KINASE DDB_G0292928-RELATED"/>
    <property type="match status" value="1"/>
</dbReference>
<dbReference type="Pfam" id="PF00334">
    <property type="entry name" value="NDK"/>
    <property type="match status" value="1"/>
</dbReference>
<dbReference type="PRINTS" id="PR01243">
    <property type="entry name" value="NUCDPKINASE"/>
</dbReference>
<dbReference type="SMART" id="SM00562">
    <property type="entry name" value="NDK"/>
    <property type="match status" value="1"/>
</dbReference>
<dbReference type="SUPFAM" id="SSF54919">
    <property type="entry name" value="Nucleoside diphosphate kinase, NDK"/>
    <property type="match status" value="1"/>
</dbReference>
<dbReference type="PROSITE" id="PS00469">
    <property type="entry name" value="NDPK"/>
    <property type="match status" value="1"/>
</dbReference>
<dbReference type="PROSITE" id="PS51374">
    <property type="entry name" value="NDPK_LIKE"/>
    <property type="match status" value="1"/>
</dbReference>
<reference key="1">
    <citation type="journal article" date="2009" name="PLoS Genet.">
        <title>Organised genome dynamics in the Escherichia coli species results in highly diverse adaptive paths.</title>
        <authorList>
            <person name="Touchon M."/>
            <person name="Hoede C."/>
            <person name="Tenaillon O."/>
            <person name="Barbe V."/>
            <person name="Baeriswyl S."/>
            <person name="Bidet P."/>
            <person name="Bingen E."/>
            <person name="Bonacorsi S."/>
            <person name="Bouchier C."/>
            <person name="Bouvet O."/>
            <person name="Calteau A."/>
            <person name="Chiapello H."/>
            <person name="Clermont O."/>
            <person name="Cruveiller S."/>
            <person name="Danchin A."/>
            <person name="Diard M."/>
            <person name="Dossat C."/>
            <person name="Karoui M.E."/>
            <person name="Frapy E."/>
            <person name="Garry L."/>
            <person name="Ghigo J.M."/>
            <person name="Gilles A.M."/>
            <person name="Johnson J."/>
            <person name="Le Bouguenec C."/>
            <person name="Lescat M."/>
            <person name="Mangenot S."/>
            <person name="Martinez-Jehanne V."/>
            <person name="Matic I."/>
            <person name="Nassif X."/>
            <person name="Oztas S."/>
            <person name="Petit M.A."/>
            <person name="Pichon C."/>
            <person name="Rouy Z."/>
            <person name="Ruf C.S."/>
            <person name="Schneider D."/>
            <person name="Tourret J."/>
            <person name="Vacherie B."/>
            <person name="Vallenet D."/>
            <person name="Medigue C."/>
            <person name="Rocha E.P.C."/>
            <person name="Denamur E."/>
        </authorList>
    </citation>
    <scope>NUCLEOTIDE SEQUENCE [LARGE SCALE GENOMIC DNA]</scope>
    <source>
        <strain>UMN026 / ExPEC</strain>
    </source>
</reference>